<proteinExistence type="inferred from homology"/>
<comment type="function">
    <text evidence="1">Factor of infectivity and pathogenicity, required for optimal virus replication. Alters numerous pathways of T-lymphocyte function and down-regulates immunity surface molecules in order to evade host defense and increase viral infectivity. Alters the functionality of other immunity cells, like dendritic cells, monocytes/macrophages and NK cells.</text>
</comment>
<comment type="function">
    <text evidence="1">In infected CD4(+) T-lymphocytes, down-regulates the surface MHC-I, mature MHC-II, CD4, CD28, CCR5 and CXCR4 molecules. Mediates internalization and degradation of host CD4 through the interaction of with the cytoplasmic tail of CD4, the recruitment of AP-2 (clathrin adapter protein complex 2), internalization through clathrin coated pits, and subsequent transport to endosomes and lysosomes for degradation. Diverts host MHC-I molecules to the trans-Golgi network-associated endosomal compartments by an endocytic pathway to finally target them for degradation. MHC-I down-regulation may involve AP-1 (clathrin adapter protein complex 1) or possibly Src family kinase-ZAP70/Syk-PI3K cascade recruited by PACS2. In consequence infected cells are masked for immune recognition by cytotoxic T-lymphocytes. Decreasing the number of immune receptors also prevents reinfection by more HIV particles (superinfection). Down-regulates host SERINC3 and SERINC5 thereby excluding these proteins from the viral particles. Virion infectivity is drastically higher when SERINC3 or SERINC5 are excluded from the viral envelope, because these host antiviral proteins impair the membrane fusion event necessary for subsequent virion penetration.</text>
</comment>
<comment type="function">
    <text evidence="1">Bypasses host T-cell signaling by inducing a transcriptional program nearly identical to that of anti-CD3 cell activation. Interaction with TCR-zeta chain up-regulates the Fas ligand (FasL). Increasing surface FasL molecules and decreasing surface MHC-I molecules on infected CD4(+) cells send attacking cytotoxic CD8+ T-lymphocytes into apoptosis.</text>
</comment>
<comment type="function">
    <text evidence="1">Plays a role in optimizing the host cell environment for viral replication without causing cell death by apoptosis. Protects the infected cells from apoptosis in order to keep them alive until the next virus generation is ready to strike. Inhibits the Fas and TNFR-mediated death signals by blocking MAP3K5/ASK1. Decreases the half-life of TP53, protecting the infected cell against p53-mediated apoptosis. Inhibits the apoptotic signals regulated by the Bcl-2 family proteins through the formation of a Nef/PI3-kinase/PAK2 complex that leads to activation of PAK2 and induces phosphorylation of host BAD.</text>
</comment>
<comment type="function">
    <text evidence="1">Extracellular Nef protein targets CD4(+) T-lymphocytes for apoptosis by interacting with CXCR4 surface receptors.</text>
</comment>
<comment type="subunit">
    <text evidence="1">Monomer; cytosolic form. Homodimer; membrane bound form. Interacts with Nef associated p21-activated kinase (PAK2); this interaction activates PAK2. Associates with the Nef-MHC-I-AP1 complex; this complex is required for MHC-I internalization. Interacts (via C-terminus) with host PI3-kinase. Interacts with host PACS1; this interaction seems to be weak. Interacts with host PACS2. Interacts with host LCK and MAPK3; these interactions inhibit the kinase activity of the latter. Interacts with host ATP6V1H; this interaction may play a role in CD4 endocytosis. Associates with the CD4-Nef-AP2 complex; this complex is required for CD4 internalization. Interacts with host AP2 subunit alpha and AP2 subunit sigma2. Interacts with TCR-zeta chain; this interaction up-regulates the Fas ligand (FasL) surface expression. Interacts with host HCK, LYN, and SRC; these interactions activate the Src family kinases. Interacts with MAP3K5; this interaction inhibits the Fas and TNFR-mediated death signals. Interacts with beta-COP and PTE1. Interacts with human RACK1; this increases Nef phosphorylation by PKC. Interacts with TP53; this interaction decreases the half-life of TP53, protecting the infected cell against p53-mediated apoptosis.</text>
</comment>
<comment type="subcellular location">
    <subcellularLocation>
        <location evidence="1">Host cell membrane</location>
        <topology evidence="1">Lipid-anchor</topology>
        <orientation evidence="1">Cytoplasmic side</orientation>
    </subcellularLocation>
    <subcellularLocation>
        <location evidence="1">Virion</location>
    </subcellularLocation>
    <subcellularLocation>
        <location evidence="1">Secreted</location>
    </subcellularLocation>
    <subcellularLocation>
        <location evidence="1">Host Golgi apparatus membrane</location>
    </subcellularLocation>
    <text evidence="1">TGN localization requires PACS1. Associates with the inner plasma membrane through its N-terminal domain. Nef stimulates its own export via the release of exosomes. Incorporated in virions at a rate of about 10 molecules per virion, where it is cleaved.</text>
</comment>
<comment type="induction">
    <text evidence="1">Expressed early in the viral replication cycle.</text>
</comment>
<comment type="domain">
    <text evidence="1">The N-terminal domain is composed of the N-myristoyl glycine and of a cluster of positively charged amino acids. It is required for inner plasma membrane targeting of Nef and virion incorporation, and thereby for infectivity. This domain is also involved in binding to TP53.</text>
</comment>
<comment type="domain">
    <text evidence="1">The SH3-binding domain constituted of PxxP motifs mediates binding to several Src family proteins thereby regulating their tyrosine kinase activity. The same motifs also mediates the association with MAPK3, PI3-kinase and TCR-zeta.</text>
</comment>
<comment type="domain">
    <text evidence="1">The dileucine internalization motif and a diacidic motif seem to be required for binding to AP-2.</text>
</comment>
<comment type="domain">
    <text evidence="1">The acidic region binds to the sorting protein PACS-2, which targets Nef to the paranuclear region, enabling the PxxP motif to direct assembly of an SFK/ZAP-70/PI3K complex that accelerates endocytosis of cell-surface MHC-I.</text>
</comment>
<comment type="PTM">
    <text evidence="1">The virion-associated Nef proteins are cleaved by the viral protease to release the soluble C-terminal core protein. Nef is probably cleaved concomitantly with viral structural proteins on maturation of virus particles.</text>
</comment>
<comment type="PTM">
    <text evidence="1">Myristoylated.</text>
</comment>
<comment type="PTM">
    <text evidence="1">Phosphorylated on serine residues, probably by host PKCdelta and theta.</text>
</comment>
<comment type="miscellaneous">
    <text evidence="1">HIV-1 lineages are divided in three main groups, M (for Major), O (for Outlier), and N (for New, or Non-M, Non-O). The vast majority of strains found worldwide belong to the group M. Group O seems to be endemic to and largely confined to Cameroon and neighboring countries in West Central Africa, where these viruses represent a small minority of HIV-1 strains. The group N is represented by a limited number of isolates from Cameroonian persons. The group M is further subdivided in 9 clades or subtypes (A to D, F to H, J and K).</text>
</comment>
<comment type="similarity">
    <text evidence="1">Belongs to the lentivirus primate group Nef protein family.</text>
</comment>
<gene>
    <name evidence="1" type="primary">nef</name>
</gene>
<evidence type="ECO:0000255" key="1">
    <source>
        <dbReference type="HAMAP-Rule" id="MF_04078"/>
    </source>
</evidence>
<accession>Q9QBZ3</accession>
<reference key="1">
    <citation type="journal article" date="2000" name="AIDS Res. Hum. Retroviruses">
        <title>Near-full-length genome sequencing of divergent African HIV type 1 subtype F viruses leads to the identification of a new HIV type 1 subtype designated K.</title>
        <authorList>
            <person name="Triques K."/>
            <person name="Bourgeois A."/>
            <person name="Vidale N."/>
            <person name="Mpoudi-Ngole E."/>
            <person name="Mulanga-Kabeya C."/>
            <person name="Nzilambi N."/>
            <person name="Torimiro N."/>
            <person name="Saman E."/>
            <person name="Delaporte E."/>
            <person name="Peeters M."/>
        </authorList>
    </citation>
    <scope>NUCLEOTIDE SEQUENCE [GENOMIC RNA]</scope>
</reference>
<feature type="initiator methionine" description="Removed; by host" evidence="1">
    <location>
        <position position="1"/>
    </location>
</feature>
<feature type="chain" id="PRO_0000244798" description="Protein Nef" evidence="1">
    <location>
        <begin position="2"/>
        <end position="200"/>
    </location>
</feature>
<feature type="chain" id="PRO_0000244799" description="C-terminal core protein" evidence="1">
    <location>
        <begin position="54"/>
        <end position="200"/>
    </location>
</feature>
<feature type="region of interest" description="Acidic; interacts with host PACS1 and PACS2; stabilizes the interaction of NEF/MHC-I with host AP1M1; necessary for MHC-I internalization" evidence="1">
    <location>
        <begin position="58"/>
        <end position="60"/>
    </location>
</feature>
<feature type="region of interest" description="SH3-binding; interaction with Src family tyrosine kinases" evidence="1">
    <location>
        <begin position="64"/>
        <end position="73"/>
    </location>
</feature>
<feature type="region of interest" description="Mediates dimerization, Nef-PTE1 interaction" evidence="1">
    <location>
        <begin position="103"/>
        <end position="119"/>
    </location>
</feature>
<feature type="region of interest" description="Binding to ATP6V1H" evidence="1">
    <location>
        <begin position="143"/>
        <end position="175"/>
    </location>
</feature>
<feature type="short sequence motif" description="PxxP; stabilizes the interaction of NEF/MHC-I with host AP1M1; necessary for MHC-I internalization" evidence="1">
    <location>
        <begin position="67"/>
        <end position="70"/>
    </location>
</feature>
<feature type="short sequence motif" description="Dileucine internalization motif; necessary for CD4 internalization" evidence="1">
    <location>
        <begin position="159"/>
        <end position="160"/>
    </location>
</feature>
<feature type="short sequence motif" description="Diacidic; necessary for CD4 internalization" evidence="1">
    <location>
        <begin position="169"/>
        <end position="170"/>
    </location>
</feature>
<feature type="site" description="Might play a role in AP-1 recruitment to the Nef-MHC-I complex" evidence="1">
    <location>
        <position position="20"/>
    </location>
</feature>
<feature type="site" description="Cleavage; by viral protease" evidence="1">
    <location>
        <begin position="53"/>
        <end position="54"/>
    </location>
</feature>
<feature type="modified residue" description="Phosphoserine; by host" evidence="1">
    <location>
        <position position="6"/>
    </location>
</feature>
<feature type="lipid moiety-binding region" description="N-myristoyl glycine; by host" evidence="1">
    <location>
        <position position="2"/>
    </location>
</feature>
<organism>
    <name type="scientific">Human immunodeficiency virus type 1 group M subtype F2 (isolate MP255)</name>
    <name type="common">HIV-1</name>
    <dbReference type="NCBI Taxonomy" id="388815"/>
    <lineage>
        <taxon>Viruses</taxon>
        <taxon>Riboviria</taxon>
        <taxon>Pararnavirae</taxon>
        <taxon>Artverviricota</taxon>
        <taxon>Revtraviricetes</taxon>
        <taxon>Ortervirales</taxon>
        <taxon>Retroviridae</taxon>
        <taxon>Orthoretrovirinae</taxon>
        <taxon>Lentivirus</taxon>
        <taxon>Human immunodeficiency virus type 1</taxon>
    </lineage>
</organism>
<protein>
    <recommendedName>
        <fullName evidence="1">Protein Nef</fullName>
    </recommendedName>
    <alternativeName>
        <fullName evidence="1">3'ORF</fullName>
    </alternativeName>
    <alternativeName>
        <fullName evidence="1">Negative factor</fullName>
        <shortName evidence="1">F-protein</shortName>
    </alternativeName>
    <component>
        <recommendedName>
            <fullName evidence="1">C-terminal core protein</fullName>
        </recommendedName>
    </component>
</protein>
<keyword id="KW-0014">AIDS</keyword>
<keyword id="KW-0053">Apoptosis</keyword>
<keyword id="KW-0244">Early protein</keyword>
<keyword id="KW-1032">Host cell membrane</keyword>
<keyword id="KW-1040">Host Golgi apparatus</keyword>
<keyword id="KW-1043">Host membrane</keyword>
<keyword id="KW-0945">Host-virus interaction</keyword>
<keyword id="KW-1080">Inhibition of host adaptive immune response by virus</keyword>
<keyword id="KW-1083">Inhibition of host autophagy by virus</keyword>
<keyword id="KW-1115">Inhibition of host MHC class I molecule presentation by virus</keyword>
<keyword id="KW-1116">Inhibition of host MHC class II molecule presentation by virus</keyword>
<keyword id="KW-0449">Lipoprotein</keyword>
<keyword id="KW-0472">Membrane</keyword>
<keyword id="KW-0519">Myristate</keyword>
<keyword id="KW-0597">Phosphoprotein</keyword>
<keyword id="KW-0964">Secreted</keyword>
<keyword id="KW-0729">SH3-binding</keyword>
<keyword id="KW-0899">Viral immunoevasion</keyword>
<keyword id="KW-0946">Virion</keyword>
<keyword id="KW-0843">Virulence</keyword>
<dbReference type="EMBL" id="AJ249236">
    <property type="protein sequence ID" value="CAB58979.1"/>
    <property type="molecule type" value="Genomic_RNA"/>
</dbReference>
<dbReference type="SMR" id="Q9QBZ3"/>
<dbReference type="Proteomes" id="UP000120463">
    <property type="component" value="Segment"/>
</dbReference>
<dbReference type="GO" id="GO:0005576">
    <property type="term" value="C:extracellular region"/>
    <property type="evidence" value="ECO:0007669"/>
    <property type="project" value="UniProtKB-SubCell"/>
</dbReference>
<dbReference type="GO" id="GO:0044178">
    <property type="term" value="C:host cell Golgi membrane"/>
    <property type="evidence" value="ECO:0007669"/>
    <property type="project" value="UniProtKB-SubCell"/>
</dbReference>
<dbReference type="GO" id="GO:0020002">
    <property type="term" value="C:host cell plasma membrane"/>
    <property type="evidence" value="ECO:0007669"/>
    <property type="project" value="UniProtKB-SubCell"/>
</dbReference>
<dbReference type="GO" id="GO:0016020">
    <property type="term" value="C:membrane"/>
    <property type="evidence" value="ECO:0007669"/>
    <property type="project" value="UniProtKB-UniRule"/>
</dbReference>
<dbReference type="GO" id="GO:0044423">
    <property type="term" value="C:virion component"/>
    <property type="evidence" value="ECO:0007669"/>
    <property type="project" value="UniProtKB-UniRule"/>
</dbReference>
<dbReference type="GO" id="GO:0005525">
    <property type="term" value="F:GTP binding"/>
    <property type="evidence" value="ECO:0007669"/>
    <property type="project" value="UniProtKB-UniRule"/>
</dbReference>
<dbReference type="GO" id="GO:0017124">
    <property type="term" value="F:SH3 domain binding"/>
    <property type="evidence" value="ECO:0007669"/>
    <property type="project" value="UniProtKB-UniRule"/>
</dbReference>
<dbReference type="GO" id="GO:0046776">
    <property type="term" value="P:symbiont-mediated suppression of host antigen processing and presentation of peptide antigen via MHC class I"/>
    <property type="evidence" value="ECO:0007669"/>
    <property type="project" value="UniProtKB-UniRule"/>
</dbReference>
<dbReference type="GO" id="GO:0039505">
    <property type="term" value="P:symbiont-mediated suppression of host antigen processing and presentation of peptide antigen via MHC class II"/>
    <property type="evidence" value="ECO:0007669"/>
    <property type="project" value="UniProtKB-UniRule"/>
</dbReference>
<dbReference type="GO" id="GO:0140321">
    <property type="term" value="P:symbiont-mediated suppression of host autophagy"/>
    <property type="evidence" value="ECO:0007669"/>
    <property type="project" value="UniProtKB-KW"/>
</dbReference>
<dbReference type="Gene3D" id="4.10.890.10">
    <property type="entry name" value="HIV 1 nef anchor domain"/>
    <property type="match status" value="1"/>
</dbReference>
<dbReference type="Gene3D" id="3.30.62.10">
    <property type="entry name" value="Nef Regulatory Factor"/>
    <property type="match status" value="1"/>
</dbReference>
<dbReference type="HAMAP" id="MF_04078">
    <property type="entry name" value="NEF_HIV"/>
    <property type="match status" value="1"/>
</dbReference>
<dbReference type="InterPro" id="IPR027480">
    <property type="entry name" value="HIV-1_Nef_anchor_sf"/>
</dbReference>
<dbReference type="InterPro" id="IPR027481">
    <property type="entry name" value="HIV-1_Nef_core_sf"/>
</dbReference>
<dbReference type="InterPro" id="IPR001558">
    <property type="entry name" value="HIV_Nef"/>
</dbReference>
<dbReference type="Pfam" id="PF00469">
    <property type="entry name" value="F-protein"/>
    <property type="match status" value="1"/>
</dbReference>
<dbReference type="SUPFAM" id="SSF55671">
    <property type="entry name" value="Regulatory factor Nef"/>
    <property type="match status" value="1"/>
</dbReference>
<name>NEF_HV1MP</name>
<sequence>MGGKWSKSSIVGWPNVRERMRAAEGVGKVSQDLDKHGAITSSNTRATNADLAWLEAQEEEVGFPVRPQVPLRPMTYKAAVDLSHFLKEKGGLEGLIYSKKRQEILDLWVYHTQGYFPDWQNYTPGPGIRYPLTLGWCFKLVPVDPEEIEKANEGENNCLLHPISLHGMEDEDREVLRWKFDSSLALRHVARERHPEFYQD</sequence>
<organismHost>
    <name type="scientific">Homo sapiens</name>
    <name type="common">Human</name>
    <dbReference type="NCBI Taxonomy" id="9606"/>
</organismHost>